<keyword id="KW-0342">GTP-binding</keyword>
<keyword id="KW-0547">Nucleotide-binding</keyword>
<keyword id="KW-1185">Reference proteome</keyword>
<keyword id="KW-0677">Repeat</keyword>
<keyword id="KW-0690">Ribosome biogenesis</keyword>
<evidence type="ECO:0000255" key="1">
    <source>
        <dbReference type="HAMAP-Rule" id="MF_00195"/>
    </source>
</evidence>
<reference key="1">
    <citation type="journal article" date="2003" name="Proc. Natl. Acad. Sci. U.S.A.">
        <title>The genome sequence of Clostridium tetani, the causative agent of tetanus disease.</title>
        <authorList>
            <person name="Brueggemann H."/>
            <person name="Baeumer S."/>
            <person name="Fricke W.F."/>
            <person name="Wiezer A."/>
            <person name="Liesegang H."/>
            <person name="Decker I."/>
            <person name="Herzberg C."/>
            <person name="Martinez-Arias R."/>
            <person name="Merkl R."/>
            <person name="Henne A."/>
            <person name="Gottschalk G."/>
        </authorList>
    </citation>
    <scope>NUCLEOTIDE SEQUENCE [LARGE SCALE GENOMIC DNA]</scope>
    <source>
        <strain>Massachusetts / E88</strain>
    </source>
</reference>
<sequence>MGKPIVAIVGRPNVGKSTLFNKLAGKRIAIVEDTPGVTRDRIYAQAEWLNHNFTIIDTGGIEPESEDIIVAQMRRQAEMAIEMADVIMFIVDGKEGLTPADNEVALMLRKSKKPIVLVVNKIDRIEEEDNMYEFYNLGIGEPTTISASQALGLGDMLDKIVENFPKGYQDEEEDEYIRIAFVGKPNVGKSSLINKILGEERNIVSNIPGTTRDAIDSFLERDEDKFILIDTAGLRRRSKVKDQIERYSTVRTYAAIDRADVCILLIDAEEGISEQDKKIIGYAHELNKALMVVVNKWDLIEKETNTMNRFKKELQSELSFMSYAPYIFISAKTGQRVGKVLDLAKECYTNYSKRISTGVLNDVISKAVMMKEPPIVAMNRLKIYYVTQVATKAPTFVFFVNDPRTLHFSYERYLENQLRQSFDFTGTGIKMEFRERKE</sequence>
<organism>
    <name type="scientific">Clostridium tetani (strain Massachusetts / E88)</name>
    <dbReference type="NCBI Taxonomy" id="212717"/>
    <lineage>
        <taxon>Bacteria</taxon>
        <taxon>Bacillati</taxon>
        <taxon>Bacillota</taxon>
        <taxon>Clostridia</taxon>
        <taxon>Eubacteriales</taxon>
        <taxon>Clostridiaceae</taxon>
        <taxon>Clostridium</taxon>
    </lineage>
</organism>
<feature type="chain" id="PRO_0000178986" description="GTPase Der">
    <location>
        <begin position="1"/>
        <end position="438"/>
    </location>
</feature>
<feature type="domain" description="EngA-type G 1">
    <location>
        <begin position="4"/>
        <end position="168"/>
    </location>
</feature>
<feature type="domain" description="EngA-type G 2">
    <location>
        <begin position="177"/>
        <end position="352"/>
    </location>
</feature>
<feature type="domain" description="KH-like" evidence="1">
    <location>
        <begin position="353"/>
        <end position="437"/>
    </location>
</feature>
<feature type="binding site" evidence="1">
    <location>
        <begin position="10"/>
        <end position="17"/>
    </location>
    <ligand>
        <name>GTP</name>
        <dbReference type="ChEBI" id="CHEBI:37565"/>
        <label>1</label>
    </ligand>
</feature>
<feature type="binding site" evidence="1">
    <location>
        <begin position="57"/>
        <end position="61"/>
    </location>
    <ligand>
        <name>GTP</name>
        <dbReference type="ChEBI" id="CHEBI:37565"/>
        <label>1</label>
    </ligand>
</feature>
<feature type="binding site" evidence="1">
    <location>
        <begin position="120"/>
        <end position="123"/>
    </location>
    <ligand>
        <name>GTP</name>
        <dbReference type="ChEBI" id="CHEBI:37565"/>
        <label>1</label>
    </ligand>
</feature>
<feature type="binding site" evidence="1">
    <location>
        <begin position="183"/>
        <end position="190"/>
    </location>
    <ligand>
        <name>GTP</name>
        <dbReference type="ChEBI" id="CHEBI:37565"/>
        <label>2</label>
    </ligand>
</feature>
<feature type="binding site" evidence="1">
    <location>
        <begin position="230"/>
        <end position="234"/>
    </location>
    <ligand>
        <name>GTP</name>
        <dbReference type="ChEBI" id="CHEBI:37565"/>
        <label>2</label>
    </ligand>
</feature>
<feature type="binding site" evidence="1">
    <location>
        <begin position="295"/>
        <end position="298"/>
    </location>
    <ligand>
        <name>GTP</name>
        <dbReference type="ChEBI" id="CHEBI:37565"/>
        <label>2</label>
    </ligand>
</feature>
<gene>
    <name evidence="1" type="primary">der</name>
    <name type="synonym">engA</name>
    <name type="ordered locus">CTC_01137</name>
</gene>
<accession>Q895X8</accession>
<protein>
    <recommendedName>
        <fullName evidence="1">GTPase Der</fullName>
    </recommendedName>
    <alternativeName>
        <fullName evidence="1">GTP-binding protein EngA</fullName>
    </alternativeName>
</protein>
<comment type="function">
    <text evidence="1">GTPase that plays an essential role in the late steps of ribosome biogenesis.</text>
</comment>
<comment type="subunit">
    <text evidence="1">Associates with the 50S ribosomal subunit.</text>
</comment>
<comment type="similarity">
    <text evidence="1">Belongs to the TRAFAC class TrmE-Era-EngA-EngB-Septin-like GTPase superfamily. EngA (Der) GTPase family.</text>
</comment>
<proteinExistence type="inferred from homology"/>
<dbReference type="EMBL" id="AE015927">
    <property type="protein sequence ID" value="AAO35712.1"/>
    <property type="molecule type" value="Genomic_DNA"/>
</dbReference>
<dbReference type="RefSeq" id="WP_011099374.1">
    <property type="nucleotide sequence ID" value="NC_004557.1"/>
</dbReference>
<dbReference type="SMR" id="Q895X8"/>
<dbReference type="STRING" id="212717.CTC_01137"/>
<dbReference type="GeneID" id="24253539"/>
<dbReference type="KEGG" id="ctc:CTC_01137"/>
<dbReference type="HOGENOM" id="CLU_016077_6_2_9"/>
<dbReference type="OrthoDB" id="9805918at2"/>
<dbReference type="Proteomes" id="UP000001412">
    <property type="component" value="Chromosome"/>
</dbReference>
<dbReference type="GO" id="GO:0016887">
    <property type="term" value="F:ATP hydrolysis activity"/>
    <property type="evidence" value="ECO:0007669"/>
    <property type="project" value="InterPro"/>
</dbReference>
<dbReference type="GO" id="GO:0005525">
    <property type="term" value="F:GTP binding"/>
    <property type="evidence" value="ECO:0007669"/>
    <property type="project" value="UniProtKB-UniRule"/>
</dbReference>
<dbReference type="GO" id="GO:0043022">
    <property type="term" value="F:ribosome binding"/>
    <property type="evidence" value="ECO:0007669"/>
    <property type="project" value="TreeGrafter"/>
</dbReference>
<dbReference type="GO" id="GO:0042254">
    <property type="term" value="P:ribosome biogenesis"/>
    <property type="evidence" value="ECO:0007669"/>
    <property type="project" value="UniProtKB-KW"/>
</dbReference>
<dbReference type="CDD" id="cd01894">
    <property type="entry name" value="EngA1"/>
    <property type="match status" value="1"/>
</dbReference>
<dbReference type="CDD" id="cd01895">
    <property type="entry name" value="EngA2"/>
    <property type="match status" value="1"/>
</dbReference>
<dbReference type="FunFam" id="3.30.300.20:FF:000004">
    <property type="entry name" value="GTPase Der"/>
    <property type="match status" value="1"/>
</dbReference>
<dbReference type="FunFam" id="3.40.50.300:FF:000040">
    <property type="entry name" value="GTPase Der"/>
    <property type="match status" value="1"/>
</dbReference>
<dbReference type="FunFam" id="3.40.50.300:FF:000057">
    <property type="entry name" value="GTPase Der"/>
    <property type="match status" value="1"/>
</dbReference>
<dbReference type="Gene3D" id="3.30.300.20">
    <property type="match status" value="1"/>
</dbReference>
<dbReference type="Gene3D" id="3.40.50.300">
    <property type="entry name" value="P-loop containing nucleotide triphosphate hydrolases"/>
    <property type="match status" value="2"/>
</dbReference>
<dbReference type="HAMAP" id="MF_00195">
    <property type="entry name" value="GTPase_Der"/>
    <property type="match status" value="1"/>
</dbReference>
<dbReference type="InterPro" id="IPR003593">
    <property type="entry name" value="AAA+_ATPase"/>
</dbReference>
<dbReference type="InterPro" id="IPR031166">
    <property type="entry name" value="G_ENGA"/>
</dbReference>
<dbReference type="InterPro" id="IPR006073">
    <property type="entry name" value="GTP-bd"/>
</dbReference>
<dbReference type="InterPro" id="IPR016484">
    <property type="entry name" value="GTPase_Der"/>
</dbReference>
<dbReference type="InterPro" id="IPR032859">
    <property type="entry name" value="KH_dom-like"/>
</dbReference>
<dbReference type="InterPro" id="IPR015946">
    <property type="entry name" value="KH_dom-like_a/b"/>
</dbReference>
<dbReference type="InterPro" id="IPR027417">
    <property type="entry name" value="P-loop_NTPase"/>
</dbReference>
<dbReference type="InterPro" id="IPR005225">
    <property type="entry name" value="Small_GTP-bd"/>
</dbReference>
<dbReference type="NCBIfam" id="TIGR03594">
    <property type="entry name" value="GTPase_EngA"/>
    <property type="match status" value="1"/>
</dbReference>
<dbReference type="NCBIfam" id="TIGR00231">
    <property type="entry name" value="small_GTP"/>
    <property type="match status" value="2"/>
</dbReference>
<dbReference type="PANTHER" id="PTHR43834">
    <property type="entry name" value="GTPASE DER"/>
    <property type="match status" value="1"/>
</dbReference>
<dbReference type="PANTHER" id="PTHR43834:SF6">
    <property type="entry name" value="GTPASE DER"/>
    <property type="match status" value="1"/>
</dbReference>
<dbReference type="Pfam" id="PF14714">
    <property type="entry name" value="KH_dom-like"/>
    <property type="match status" value="1"/>
</dbReference>
<dbReference type="Pfam" id="PF01926">
    <property type="entry name" value="MMR_HSR1"/>
    <property type="match status" value="2"/>
</dbReference>
<dbReference type="PIRSF" id="PIRSF006485">
    <property type="entry name" value="GTP-binding_EngA"/>
    <property type="match status" value="1"/>
</dbReference>
<dbReference type="PRINTS" id="PR00326">
    <property type="entry name" value="GTP1OBG"/>
</dbReference>
<dbReference type="SMART" id="SM00382">
    <property type="entry name" value="AAA"/>
    <property type="match status" value="2"/>
</dbReference>
<dbReference type="SUPFAM" id="SSF52540">
    <property type="entry name" value="P-loop containing nucleoside triphosphate hydrolases"/>
    <property type="match status" value="2"/>
</dbReference>
<dbReference type="PROSITE" id="PS51712">
    <property type="entry name" value="G_ENGA"/>
    <property type="match status" value="2"/>
</dbReference>
<name>DER_CLOTE</name>